<protein>
    <recommendedName>
        <fullName>Polyferredoxin protein MvhB</fullName>
    </recommendedName>
</protein>
<feature type="chain" id="PRO_0000159143" description="Polyferredoxin protein MvhB">
    <location>
        <begin position="1"/>
        <end position="412"/>
    </location>
</feature>
<feature type="domain" description="4Fe-4S ferredoxin-type 1" evidence="2">
    <location>
        <begin position="2"/>
        <end position="29"/>
    </location>
</feature>
<feature type="domain" description="4Fe-4S ferredoxin-type 2" evidence="2">
    <location>
        <begin position="30"/>
        <end position="57"/>
    </location>
</feature>
<feature type="domain" description="4Fe-4S ferredoxin-type 3" evidence="2">
    <location>
        <begin position="67"/>
        <end position="96"/>
    </location>
</feature>
<feature type="domain" description="4Fe-4S ferredoxin-type 4" evidence="2">
    <location>
        <begin position="97"/>
        <end position="127"/>
    </location>
</feature>
<feature type="domain" description="4Fe-4S ferredoxin-type 5" evidence="2">
    <location>
        <begin position="138"/>
        <end position="166"/>
    </location>
</feature>
<feature type="domain" description="4Fe-4S ferredoxin-type 6" evidence="2">
    <location>
        <begin position="168"/>
        <end position="197"/>
    </location>
</feature>
<feature type="domain" description="4Fe-4S ferredoxin-type 7" evidence="2">
    <location>
        <begin position="207"/>
        <end position="236"/>
    </location>
</feature>
<feature type="domain" description="4Fe-4S ferredoxin-type 8" evidence="2">
    <location>
        <begin position="238"/>
        <end position="266"/>
    </location>
</feature>
<feature type="domain" description="4Fe-4S ferredoxin-type 9" evidence="2">
    <location>
        <begin position="276"/>
        <end position="305"/>
    </location>
</feature>
<feature type="domain" description="4Fe-4S ferredoxin-type 10" evidence="2">
    <location>
        <begin position="314"/>
        <end position="345"/>
    </location>
</feature>
<feature type="domain" description="4Fe-4S ferredoxin-type 11" evidence="2">
    <location>
        <begin position="357"/>
        <end position="386"/>
    </location>
</feature>
<feature type="domain" description="4Fe-4S ferredoxin-type 12" evidence="2">
    <location>
        <begin position="385"/>
        <end position="412"/>
    </location>
</feature>
<feature type="binding site" evidence="1">
    <location>
        <position position="9"/>
    </location>
    <ligand>
        <name>[4Fe-4S] cluster</name>
        <dbReference type="ChEBI" id="CHEBI:49883"/>
    </ligand>
</feature>
<feature type="binding site" evidence="1">
    <location>
        <position position="12"/>
    </location>
    <ligand>
        <name>[4Fe-4S] cluster</name>
        <dbReference type="ChEBI" id="CHEBI:49883"/>
    </ligand>
</feature>
<feature type="binding site" evidence="1">
    <location>
        <position position="15"/>
    </location>
    <ligand>
        <name>[4Fe-4S] cluster</name>
        <dbReference type="ChEBI" id="CHEBI:49883"/>
    </ligand>
</feature>
<feature type="binding site" evidence="1">
    <location>
        <position position="19"/>
    </location>
    <ligand>
        <name>[4Fe-4S] cluster</name>
        <dbReference type="ChEBI" id="CHEBI:49883"/>
    </ligand>
</feature>
<feature type="binding site" evidence="1">
    <location>
        <position position="76"/>
    </location>
    <ligand>
        <name>[4Fe-4S] cluster</name>
        <dbReference type="ChEBI" id="CHEBI:49883"/>
    </ligand>
</feature>
<feature type="binding site" evidence="1">
    <location>
        <position position="79"/>
    </location>
    <ligand>
        <name>[4Fe-4S] cluster</name>
        <dbReference type="ChEBI" id="CHEBI:49883"/>
    </ligand>
</feature>
<feature type="binding site" evidence="1">
    <location>
        <position position="82"/>
    </location>
    <ligand>
        <name>[4Fe-4S] cluster</name>
        <dbReference type="ChEBI" id="CHEBI:49883"/>
    </ligand>
</feature>
<feature type="binding site" evidence="1">
    <location>
        <position position="86"/>
    </location>
    <ligand>
        <name>[4Fe-4S] cluster</name>
        <dbReference type="ChEBI" id="CHEBI:49883"/>
    </ligand>
</feature>
<feature type="binding site" evidence="1">
    <location>
        <position position="107"/>
    </location>
    <ligand>
        <name>[4Fe-4S] cluster</name>
        <dbReference type="ChEBI" id="CHEBI:49883"/>
    </ligand>
</feature>
<feature type="binding site" evidence="1">
    <location>
        <position position="110"/>
    </location>
    <ligand>
        <name>[4Fe-4S] cluster</name>
        <dbReference type="ChEBI" id="CHEBI:49883"/>
    </ligand>
</feature>
<feature type="binding site" evidence="1">
    <location>
        <position position="113"/>
    </location>
    <ligand>
        <name>[4Fe-4S] cluster</name>
        <dbReference type="ChEBI" id="CHEBI:49883"/>
    </ligand>
</feature>
<feature type="binding site" evidence="1">
    <location>
        <position position="117"/>
    </location>
    <ligand>
        <name>[4Fe-4S] cluster</name>
        <dbReference type="ChEBI" id="CHEBI:49883"/>
    </ligand>
</feature>
<feature type="binding site" evidence="1">
    <location>
        <position position="146"/>
    </location>
    <ligand>
        <name>[4Fe-4S] cluster</name>
        <dbReference type="ChEBI" id="CHEBI:49883"/>
    </ligand>
</feature>
<feature type="binding site" evidence="1">
    <location>
        <position position="149"/>
    </location>
    <ligand>
        <name>[4Fe-4S] cluster</name>
        <dbReference type="ChEBI" id="CHEBI:49883"/>
    </ligand>
</feature>
<feature type="binding site" evidence="1">
    <location>
        <position position="152"/>
    </location>
    <ligand>
        <name>[4Fe-4S] cluster</name>
        <dbReference type="ChEBI" id="CHEBI:49883"/>
    </ligand>
</feature>
<feature type="binding site" evidence="1">
    <location>
        <position position="156"/>
    </location>
    <ligand>
        <name>[4Fe-4S] cluster</name>
        <dbReference type="ChEBI" id="CHEBI:49883"/>
    </ligand>
</feature>
<feature type="binding site" evidence="1">
    <location>
        <position position="177"/>
    </location>
    <ligand>
        <name>[4Fe-4S] cluster</name>
        <dbReference type="ChEBI" id="CHEBI:49883"/>
    </ligand>
</feature>
<feature type="binding site" evidence="1">
    <location>
        <position position="180"/>
    </location>
    <ligand>
        <name>[4Fe-4S] cluster</name>
        <dbReference type="ChEBI" id="CHEBI:49883"/>
    </ligand>
</feature>
<feature type="binding site" evidence="1">
    <location>
        <position position="183"/>
    </location>
    <ligand>
        <name>[4Fe-4S] cluster</name>
        <dbReference type="ChEBI" id="CHEBI:49883"/>
    </ligand>
</feature>
<feature type="binding site" evidence="1">
    <location>
        <position position="187"/>
    </location>
    <ligand>
        <name>[4Fe-4S] cluster</name>
        <dbReference type="ChEBI" id="CHEBI:49883"/>
    </ligand>
</feature>
<feature type="binding site" evidence="1">
    <location>
        <position position="216"/>
    </location>
    <ligand>
        <name>[4Fe-4S] cluster</name>
        <dbReference type="ChEBI" id="CHEBI:49883"/>
    </ligand>
</feature>
<feature type="binding site" evidence="1">
    <location>
        <position position="219"/>
    </location>
    <ligand>
        <name>[4Fe-4S] cluster</name>
        <dbReference type="ChEBI" id="CHEBI:49883"/>
    </ligand>
</feature>
<feature type="binding site" evidence="1">
    <location>
        <position position="222"/>
    </location>
    <ligand>
        <name>[4Fe-4S] cluster</name>
        <dbReference type="ChEBI" id="CHEBI:49883"/>
    </ligand>
</feature>
<feature type="binding site" evidence="1">
    <location>
        <position position="226"/>
    </location>
    <ligand>
        <name>[4Fe-4S] cluster</name>
        <dbReference type="ChEBI" id="CHEBI:49883"/>
    </ligand>
</feature>
<feature type="binding site" evidence="1">
    <location>
        <position position="246"/>
    </location>
    <ligand>
        <name>[4Fe-4S] cluster</name>
        <dbReference type="ChEBI" id="CHEBI:49883"/>
    </ligand>
</feature>
<feature type="binding site" evidence="1">
    <location>
        <position position="249"/>
    </location>
    <ligand>
        <name>[4Fe-4S] cluster</name>
        <dbReference type="ChEBI" id="CHEBI:49883"/>
    </ligand>
</feature>
<feature type="binding site" evidence="1">
    <location>
        <position position="252"/>
    </location>
    <ligand>
        <name>[4Fe-4S] cluster</name>
        <dbReference type="ChEBI" id="CHEBI:49883"/>
    </ligand>
</feature>
<feature type="binding site" evidence="1">
    <location>
        <position position="256"/>
    </location>
    <ligand>
        <name>[4Fe-4S] cluster</name>
        <dbReference type="ChEBI" id="CHEBI:49883"/>
    </ligand>
</feature>
<feature type="binding site" evidence="1">
    <location>
        <position position="325"/>
    </location>
    <ligand>
        <name>[4Fe-4S] cluster</name>
        <dbReference type="ChEBI" id="CHEBI:49883"/>
    </ligand>
</feature>
<feature type="binding site" evidence="1">
    <location>
        <position position="328"/>
    </location>
    <ligand>
        <name>[4Fe-4S] cluster</name>
        <dbReference type="ChEBI" id="CHEBI:49883"/>
    </ligand>
</feature>
<feature type="binding site" evidence="1">
    <location>
        <position position="331"/>
    </location>
    <ligand>
        <name>[4Fe-4S] cluster</name>
        <dbReference type="ChEBI" id="CHEBI:49883"/>
    </ligand>
</feature>
<feature type="binding site" evidence="1">
    <location>
        <position position="335"/>
    </location>
    <ligand>
        <name>[4Fe-4S] cluster</name>
        <dbReference type="ChEBI" id="CHEBI:49883"/>
    </ligand>
</feature>
<feature type="binding site" evidence="1">
    <location>
        <position position="366"/>
    </location>
    <ligand>
        <name>[4Fe-4S] cluster</name>
        <dbReference type="ChEBI" id="CHEBI:49883"/>
    </ligand>
</feature>
<feature type="binding site" evidence="1">
    <location>
        <position position="369"/>
    </location>
    <ligand>
        <name>[4Fe-4S] cluster</name>
        <dbReference type="ChEBI" id="CHEBI:49883"/>
    </ligand>
</feature>
<feature type="binding site" evidence="1">
    <location>
        <position position="372"/>
    </location>
    <ligand>
        <name>[4Fe-4S] cluster</name>
        <dbReference type="ChEBI" id="CHEBI:49883"/>
    </ligand>
</feature>
<feature type="binding site" evidence="1">
    <location>
        <position position="376"/>
    </location>
    <ligand>
        <name>[4Fe-4S] cluster</name>
        <dbReference type="ChEBI" id="CHEBI:49883"/>
    </ligand>
</feature>
<feature type="binding site" evidence="1">
    <location>
        <position position="394"/>
    </location>
    <ligand>
        <name>[4Fe-4S] cluster</name>
        <dbReference type="ChEBI" id="CHEBI:49883"/>
    </ligand>
</feature>
<feature type="binding site" evidence="1">
    <location>
        <position position="397"/>
    </location>
    <ligand>
        <name>[4Fe-4S] cluster</name>
        <dbReference type="ChEBI" id="CHEBI:49883"/>
    </ligand>
</feature>
<feature type="binding site" evidence="1">
    <location>
        <position position="400"/>
    </location>
    <ligand>
        <name>[4Fe-4S] cluster</name>
        <dbReference type="ChEBI" id="CHEBI:49883"/>
    </ligand>
</feature>
<feature type="binding site" evidence="1">
    <location>
        <position position="404"/>
    </location>
    <ligand>
        <name>[4Fe-4S] cluster</name>
        <dbReference type="ChEBI" id="CHEBI:49883"/>
    </ligand>
</feature>
<feature type="sequence conflict" description="In Ref. 1; AAB02352." evidence="3" ref="1">
    <original>G</original>
    <variation>A</variation>
    <location>
        <position position="96"/>
    </location>
</feature>
<sequence>MIIVNKEDCIRCGACQGTCPTAAIEVTPEDVIYCDICGGEPKCVDICPTGALKLEDLVVDEAGNTQGRIVFNPDKCNECGDCVEVCPPQILKLDEGKVKKVPLQGFCVMCQKCVDICPVGVIGVEGIKEPAKVELEIEGPIFIADCVGCGMCVPECPVDAITLDKVGGVIEIDEDTCIKCGVCAQTCPWNAVYISGRKPEKRAKEIKKFELDEDACIGCNTCVEACPGDFIVPRTSNLTVELPAICTACGLCEQLCPVDAIDLEVELGPAKPASEEGLVWDEEKCDFIGACANICPNDAIRVVTKEGMKVPDNEKVDEEPSFAMCTRCGACTVACPKGALSLVDMDKVVDGEVVKRKRVQYNPALCDQCGDCIEACPYDMLKLTDEKVPLKGFCILCDQCIPACPKGALSLK</sequence>
<reference key="1">
    <citation type="journal article" date="1989" name="Proc. Natl. Acad. Sci. U.S.A.">
        <title>A hydrogenase-linked gene in Methanobacterium thermoautotrophicum strain delta H encodes a polyferredoxin.</title>
        <authorList>
            <person name="Reeve J.N."/>
            <person name="Beckler G.S."/>
            <person name="Cram D.S."/>
            <person name="Hamilton P.T."/>
            <person name="Brown J.W."/>
            <person name="Krzycki J.A."/>
            <person name="Kolodziej A.F."/>
            <person name="Alex L."/>
            <person name="Orme-Johnson W.H."/>
            <person name="Walsh C.T."/>
        </authorList>
    </citation>
    <scope>NUCLEOTIDE SEQUENCE [GENOMIC DNA]</scope>
    <source>
        <strain>ATCC 29096 / DSM 1053 / JCM 10044 / NBRC 100330 / Delta H</strain>
    </source>
</reference>
<reference key="2">
    <citation type="journal article" date="1997" name="J. Bacteriol.">
        <title>Complete genome sequence of Methanobacterium thermoautotrophicum deltaH: functional analysis and comparative genomics.</title>
        <authorList>
            <person name="Smith D.R."/>
            <person name="Doucette-Stamm L.A."/>
            <person name="Deloughery C."/>
            <person name="Lee H.-M."/>
            <person name="Dubois J."/>
            <person name="Aldredge T."/>
            <person name="Bashirzadeh R."/>
            <person name="Blakely D."/>
            <person name="Cook R."/>
            <person name="Gilbert K."/>
            <person name="Harrison D."/>
            <person name="Hoang L."/>
            <person name="Keagle P."/>
            <person name="Lumm W."/>
            <person name="Pothier B."/>
            <person name="Qiu D."/>
            <person name="Spadafora R."/>
            <person name="Vicare R."/>
            <person name="Wang Y."/>
            <person name="Wierzbowski J."/>
            <person name="Gibson R."/>
            <person name="Jiwani N."/>
            <person name="Caruso A."/>
            <person name="Bush D."/>
            <person name="Safer H."/>
            <person name="Patwell D."/>
            <person name="Prabhakar S."/>
            <person name="McDougall S."/>
            <person name="Shimer G."/>
            <person name="Goyal A."/>
            <person name="Pietrovski S."/>
            <person name="Church G.M."/>
            <person name="Daniels C.J."/>
            <person name="Mao J.-I."/>
            <person name="Rice P."/>
            <person name="Noelling J."/>
            <person name="Reeve J.N."/>
        </authorList>
    </citation>
    <scope>NUCLEOTIDE SEQUENCE [LARGE SCALE GENOMIC DNA]</scope>
    <source>
        <strain>ATCC 29096 / DSM 1053 / JCM 10044 / NBRC 100330 / Delta H</strain>
    </source>
</reference>
<proteinExistence type="predicted"/>
<gene>
    <name type="primary">mvhB</name>
    <name type="ordered locus">MTH_1133</name>
</gene>
<comment type="cofactor">
    <cofactor evidence="3">
        <name>[4Fe-4S] cluster</name>
        <dbReference type="ChEBI" id="CHEBI:49883"/>
    </cofactor>
    <text evidence="3">Binds 10 [4Fe-4S] clusters.</text>
</comment>
<organism>
    <name type="scientific">Methanothermobacter thermautotrophicus (strain ATCC 29096 / DSM 1053 / JCM 10044 / NBRC 100330 / Delta H)</name>
    <name type="common">Methanobacterium thermoautotrophicum</name>
    <dbReference type="NCBI Taxonomy" id="187420"/>
    <lineage>
        <taxon>Archaea</taxon>
        <taxon>Methanobacteriati</taxon>
        <taxon>Methanobacteriota</taxon>
        <taxon>Methanomada group</taxon>
        <taxon>Methanobacteria</taxon>
        <taxon>Methanobacteriales</taxon>
        <taxon>Methanobacteriaceae</taxon>
        <taxon>Methanothermobacter</taxon>
    </lineage>
</organism>
<accession>Q50784</accession>
<accession>O27205</accession>
<dbReference type="EMBL" id="J04540">
    <property type="protein sequence ID" value="AAB02352.1"/>
    <property type="molecule type" value="Genomic_DNA"/>
</dbReference>
<dbReference type="EMBL" id="AE000666">
    <property type="protein sequence ID" value="AAB85622.1"/>
    <property type="molecule type" value="Genomic_DNA"/>
</dbReference>
<dbReference type="PIR" id="G30315">
    <property type="entry name" value="G30315"/>
</dbReference>
<dbReference type="RefSeq" id="WP_010876757.1">
    <property type="nucleotide sequence ID" value="NC_000916.1"/>
</dbReference>
<dbReference type="SMR" id="Q50784"/>
<dbReference type="FunCoup" id="Q50784">
    <property type="interactions" value="4"/>
</dbReference>
<dbReference type="STRING" id="187420.MTH_1133"/>
<dbReference type="PaxDb" id="187420-MTH_1133"/>
<dbReference type="EnsemblBacteria" id="AAB85622">
    <property type="protein sequence ID" value="AAB85622"/>
    <property type="gene ID" value="MTH_1133"/>
</dbReference>
<dbReference type="GeneID" id="1471541"/>
<dbReference type="GeneID" id="77401662"/>
<dbReference type="KEGG" id="mth:MTH_1133"/>
<dbReference type="PATRIC" id="fig|187420.15.peg.1110"/>
<dbReference type="HOGENOM" id="CLU_693748_0_0_2"/>
<dbReference type="InParanoid" id="Q50784"/>
<dbReference type="Proteomes" id="UP000005223">
    <property type="component" value="Chromosome"/>
</dbReference>
<dbReference type="GO" id="GO:0051539">
    <property type="term" value="F:4 iron, 4 sulfur cluster binding"/>
    <property type="evidence" value="ECO:0007669"/>
    <property type="project" value="UniProtKB-KW"/>
</dbReference>
<dbReference type="GO" id="GO:0009055">
    <property type="term" value="F:electron transfer activity"/>
    <property type="evidence" value="ECO:0007669"/>
    <property type="project" value="InterPro"/>
</dbReference>
<dbReference type="GO" id="GO:0005506">
    <property type="term" value="F:iron ion binding"/>
    <property type="evidence" value="ECO:0007669"/>
    <property type="project" value="InterPro"/>
</dbReference>
<dbReference type="GO" id="GO:0016491">
    <property type="term" value="F:oxidoreductase activity"/>
    <property type="evidence" value="ECO:0007669"/>
    <property type="project" value="UniProtKB-ARBA"/>
</dbReference>
<dbReference type="CDD" id="cd10549">
    <property type="entry name" value="MtMvhB_like"/>
    <property type="match status" value="3"/>
</dbReference>
<dbReference type="Gene3D" id="3.30.70.20">
    <property type="match status" value="6"/>
</dbReference>
<dbReference type="InterPro" id="IPR001080">
    <property type="entry name" value="3Fe4S_ferredoxin"/>
</dbReference>
<dbReference type="InterPro" id="IPR017896">
    <property type="entry name" value="4Fe4S_Fe-S-bd"/>
</dbReference>
<dbReference type="InterPro" id="IPR017900">
    <property type="entry name" value="4Fe4S_Fe_S_CS"/>
</dbReference>
<dbReference type="InterPro" id="IPR050572">
    <property type="entry name" value="Fe-S_Ferredoxin"/>
</dbReference>
<dbReference type="PANTHER" id="PTHR43687">
    <property type="entry name" value="ADENYLYLSULFATE REDUCTASE, BETA SUBUNIT"/>
    <property type="match status" value="1"/>
</dbReference>
<dbReference type="PANTHER" id="PTHR43687:SF1">
    <property type="entry name" value="FERREDOXIN III"/>
    <property type="match status" value="1"/>
</dbReference>
<dbReference type="Pfam" id="PF00037">
    <property type="entry name" value="Fer4"/>
    <property type="match status" value="2"/>
</dbReference>
<dbReference type="Pfam" id="PF14697">
    <property type="entry name" value="Fer4_21"/>
    <property type="match status" value="1"/>
</dbReference>
<dbReference type="Pfam" id="PF12798">
    <property type="entry name" value="Fer4_3"/>
    <property type="match status" value="2"/>
</dbReference>
<dbReference type="Pfam" id="PF12838">
    <property type="entry name" value="Fer4_7"/>
    <property type="match status" value="3"/>
</dbReference>
<dbReference type="PRINTS" id="PR00352">
    <property type="entry name" value="3FE4SFRDOXIN"/>
</dbReference>
<dbReference type="SUPFAM" id="SSF54862">
    <property type="entry name" value="4Fe-4S ferredoxins"/>
    <property type="match status" value="4"/>
</dbReference>
<dbReference type="PROSITE" id="PS00198">
    <property type="entry name" value="4FE4S_FER_1"/>
    <property type="match status" value="10"/>
</dbReference>
<dbReference type="PROSITE" id="PS51379">
    <property type="entry name" value="4FE4S_FER_2"/>
    <property type="match status" value="12"/>
</dbReference>
<keyword id="KW-0004">4Fe-4S</keyword>
<keyword id="KW-0249">Electron transport</keyword>
<keyword id="KW-0408">Iron</keyword>
<keyword id="KW-0411">Iron-sulfur</keyword>
<keyword id="KW-0479">Metal-binding</keyword>
<keyword id="KW-1185">Reference proteome</keyword>
<keyword id="KW-0677">Repeat</keyword>
<keyword id="KW-0813">Transport</keyword>
<evidence type="ECO:0000255" key="1"/>
<evidence type="ECO:0000255" key="2">
    <source>
        <dbReference type="PROSITE-ProRule" id="PRU00711"/>
    </source>
</evidence>
<evidence type="ECO:0000305" key="3"/>
<name>MVHB_METTH</name>